<proteinExistence type="inferred from homology"/>
<evidence type="ECO:0000255" key="1">
    <source>
        <dbReference type="HAMAP-Rule" id="MF_00281"/>
    </source>
</evidence>
<gene>
    <name evidence="1" type="primary">pheS</name>
    <name type="ordered locus">PSPPH_2139</name>
</gene>
<keyword id="KW-0030">Aminoacyl-tRNA synthetase</keyword>
<keyword id="KW-0067">ATP-binding</keyword>
<keyword id="KW-0963">Cytoplasm</keyword>
<keyword id="KW-0436">Ligase</keyword>
<keyword id="KW-0460">Magnesium</keyword>
<keyword id="KW-0479">Metal-binding</keyword>
<keyword id="KW-0547">Nucleotide-binding</keyword>
<keyword id="KW-0648">Protein biosynthesis</keyword>
<protein>
    <recommendedName>
        <fullName evidence="1">Phenylalanine--tRNA ligase alpha subunit</fullName>
        <ecNumber evidence="1">6.1.1.20</ecNumber>
    </recommendedName>
    <alternativeName>
        <fullName evidence="1">Phenylalanyl-tRNA synthetase alpha subunit</fullName>
        <shortName evidence="1">PheRS</shortName>
    </alternativeName>
</protein>
<dbReference type="EC" id="6.1.1.20" evidence="1"/>
<dbReference type="EMBL" id="CP000058">
    <property type="protein sequence ID" value="AAZ36415.1"/>
    <property type="molecule type" value="Genomic_DNA"/>
</dbReference>
<dbReference type="RefSeq" id="WP_003367019.1">
    <property type="nucleotide sequence ID" value="NC_005773.3"/>
</dbReference>
<dbReference type="SMR" id="Q48JR9"/>
<dbReference type="GeneID" id="77278030"/>
<dbReference type="KEGG" id="psp:PSPPH_2139"/>
<dbReference type="eggNOG" id="COG0016">
    <property type="taxonomic scope" value="Bacteria"/>
</dbReference>
<dbReference type="HOGENOM" id="CLU_025086_0_1_6"/>
<dbReference type="Proteomes" id="UP000000551">
    <property type="component" value="Chromosome"/>
</dbReference>
<dbReference type="GO" id="GO:0005737">
    <property type="term" value="C:cytoplasm"/>
    <property type="evidence" value="ECO:0007669"/>
    <property type="project" value="UniProtKB-SubCell"/>
</dbReference>
<dbReference type="GO" id="GO:0005524">
    <property type="term" value="F:ATP binding"/>
    <property type="evidence" value="ECO:0007669"/>
    <property type="project" value="UniProtKB-UniRule"/>
</dbReference>
<dbReference type="GO" id="GO:0000287">
    <property type="term" value="F:magnesium ion binding"/>
    <property type="evidence" value="ECO:0007669"/>
    <property type="project" value="UniProtKB-UniRule"/>
</dbReference>
<dbReference type="GO" id="GO:0004826">
    <property type="term" value="F:phenylalanine-tRNA ligase activity"/>
    <property type="evidence" value="ECO:0007669"/>
    <property type="project" value="UniProtKB-UniRule"/>
</dbReference>
<dbReference type="GO" id="GO:0000049">
    <property type="term" value="F:tRNA binding"/>
    <property type="evidence" value="ECO:0007669"/>
    <property type="project" value="InterPro"/>
</dbReference>
<dbReference type="GO" id="GO:0006432">
    <property type="term" value="P:phenylalanyl-tRNA aminoacylation"/>
    <property type="evidence" value="ECO:0007669"/>
    <property type="project" value="UniProtKB-UniRule"/>
</dbReference>
<dbReference type="CDD" id="cd00496">
    <property type="entry name" value="PheRS_alpha_core"/>
    <property type="match status" value="1"/>
</dbReference>
<dbReference type="FunFam" id="3.30.930.10:FF:000003">
    <property type="entry name" value="Phenylalanine--tRNA ligase alpha subunit"/>
    <property type="match status" value="1"/>
</dbReference>
<dbReference type="Gene3D" id="3.30.930.10">
    <property type="entry name" value="Bira Bifunctional Protein, Domain 2"/>
    <property type="match status" value="1"/>
</dbReference>
<dbReference type="HAMAP" id="MF_00281">
    <property type="entry name" value="Phe_tRNA_synth_alpha1"/>
    <property type="match status" value="1"/>
</dbReference>
<dbReference type="InterPro" id="IPR006195">
    <property type="entry name" value="aa-tRNA-synth_II"/>
</dbReference>
<dbReference type="InterPro" id="IPR045864">
    <property type="entry name" value="aa-tRNA-synth_II/BPL/LPL"/>
</dbReference>
<dbReference type="InterPro" id="IPR004529">
    <property type="entry name" value="Phe-tRNA-synth_IIc_asu"/>
</dbReference>
<dbReference type="InterPro" id="IPR004188">
    <property type="entry name" value="Phe-tRNA_ligase_II_N"/>
</dbReference>
<dbReference type="InterPro" id="IPR022911">
    <property type="entry name" value="Phe_tRNA_ligase_alpha1_bac"/>
</dbReference>
<dbReference type="InterPro" id="IPR002319">
    <property type="entry name" value="Phenylalanyl-tRNA_Synthase"/>
</dbReference>
<dbReference type="InterPro" id="IPR010978">
    <property type="entry name" value="tRNA-bd_arm"/>
</dbReference>
<dbReference type="NCBIfam" id="TIGR00468">
    <property type="entry name" value="pheS"/>
    <property type="match status" value="1"/>
</dbReference>
<dbReference type="PANTHER" id="PTHR11538:SF41">
    <property type="entry name" value="PHENYLALANINE--TRNA LIGASE, MITOCHONDRIAL"/>
    <property type="match status" value="1"/>
</dbReference>
<dbReference type="PANTHER" id="PTHR11538">
    <property type="entry name" value="PHENYLALANYL-TRNA SYNTHETASE"/>
    <property type="match status" value="1"/>
</dbReference>
<dbReference type="Pfam" id="PF02912">
    <property type="entry name" value="Phe_tRNA-synt_N"/>
    <property type="match status" value="1"/>
</dbReference>
<dbReference type="Pfam" id="PF01409">
    <property type="entry name" value="tRNA-synt_2d"/>
    <property type="match status" value="1"/>
</dbReference>
<dbReference type="SUPFAM" id="SSF55681">
    <property type="entry name" value="Class II aaRS and biotin synthetases"/>
    <property type="match status" value="1"/>
</dbReference>
<dbReference type="SUPFAM" id="SSF46589">
    <property type="entry name" value="tRNA-binding arm"/>
    <property type="match status" value="1"/>
</dbReference>
<dbReference type="PROSITE" id="PS50862">
    <property type="entry name" value="AA_TRNA_LIGASE_II"/>
    <property type="match status" value="1"/>
</dbReference>
<accession>Q48JR9</accession>
<reference key="1">
    <citation type="journal article" date="2005" name="J. Bacteriol.">
        <title>Whole-genome sequence analysis of Pseudomonas syringae pv. phaseolicola 1448A reveals divergence among pathovars in genes involved in virulence and transposition.</title>
        <authorList>
            <person name="Joardar V."/>
            <person name="Lindeberg M."/>
            <person name="Jackson R.W."/>
            <person name="Selengut J."/>
            <person name="Dodson R."/>
            <person name="Brinkac L.M."/>
            <person name="Daugherty S.C."/>
            <person name="DeBoy R.T."/>
            <person name="Durkin A.S."/>
            <person name="Gwinn Giglio M."/>
            <person name="Madupu R."/>
            <person name="Nelson W.C."/>
            <person name="Rosovitz M.J."/>
            <person name="Sullivan S.A."/>
            <person name="Crabtree J."/>
            <person name="Creasy T."/>
            <person name="Davidsen T.M."/>
            <person name="Haft D.H."/>
            <person name="Zafar N."/>
            <person name="Zhou L."/>
            <person name="Halpin R."/>
            <person name="Holley T."/>
            <person name="Khouri H.M."/>
            <person name="Feldblyum T.V."/>
            <person name="White O."/>
            <person name="Fraser C.M."/>
            <person name="Chatterjee A.K."/>
            <person name="Cartinhour S."/>
            <person name="Schneider D."/>
            <person name="Mansfield J.W."/>
            <person name="Collmer A."/>
            <person name="Buell R."/>
        </authorList>
    </citation>
    <scope>NUCLEOTIDE SEQUENCE [LARGE SCALE GENOMIC DNA]</scope>
    <source>
        <strain>1448A / Race 6</strain>
    </source>
</reference>
<name>SYFA_PSE14</name>
<comment type="catalytic activity">
    <reaction evidence="1">
        <text>tRNA(Phe) + L-phenylalanine + ATP = L-phenylalanyl-tRNA(Phe) + AMP + diphosphate + H(+)</text>
        <dbReference type="Rhea" id="RHEA:19413"/>
        <dbReference type="Rhea" id="RHEA-COMP:9668"/>
        <dbReference type="Rhea" id="RHEA-COMP:9699"/>
        <dbReference type="ChEBI" id="CHEBI:15378"/>
        <dbReference type="ChEBI" id="CHEBI:30616"/>
        <dbReference type="ChEBI" id="CHEBI:33019"/>
        <dbReference type="ChEBI" id="CHEBI:58095"/>
        <dbReference type="ChEBI" id="CHEBI:78442"/>
        <dbReference type="ChEBI" id="CHEBI:78531"/>
        <dbReference type="ChEBI" id="CHEBI:456215"/>
        <dbReference type="EC" id="6.1.1.20"/>
    </reaction>
</comment>
<comment type="cofactor">
    <cofactor evidence="1">
        <name>Mg(2+)</name>
        <dbReference type="ChEBI" id="CHEBI:18420"/>
    </cofactor>
    <text evidence="1">Binds 2 magnesium ions per tetramer.</text>
</comment>
<comment type="subunit">
    <text evidence="1">Tetramer of two alpha and two beta subunits.</text>
</comment>
<comment type="subcellular location">
    <subcellularLocation>
        <location evidence="1">Cytoplasm</location>
    </subcellularLocation>
</comment>
<comment type="similarity">
    <text evidence="1">Belongs to the class-II aminoacyl-tRNA synthetase family. Phe-tRNA synthetase alpha subunit type 1 subfamily.</text>
</comment>
<feature type="chain" id="PRO_0000232014" description="Phenylalanine--tRNA ligase alpha subunit">
    <location>
        <begin position="1"/>
        <end position="338"/>
    </location>
</feature>
<feature type="binding site" evidence="1">
    <location>
        <position position="252"/>
    </location>
    <ligand>
        <name>Mg(2+)</name>
        <dbReference type="ChEBI" id="CHEBI:18420"/>
        <note>shared with beta subunit</note>
    </ligand>
</feature>
<sequence length="338" mass="38199">MENLDALVSQALEAVQSAEDINALEQIRVHYLGKKGELTQVMKTLGNLPAEERPQVGALINVAKERVTEVLNARKASFEQAELTARLAAECIDVTLPGRGQTSGGLHPITRTLERIEQFFTHIGYGIAEGPEVEDDYHNFEALNIPGHHPARSMHDTFYFNANMLLRTHTSPVQVRTMESQQPPIRIVCPGRVYRSDSDITHSPMFHQIEGLLVDRDINFADLKGTIEEFLRVFFEKELAVRFRPSYFPFTEPSAEVDMECVMCSGKGCRVCKQTGWLEVMGCGMVHPNVLRMSGIDPEEFQGFAFGMGVERLAMLRYGVNDLRLFFDNDLRFLAQFR</sequence>
<organism>
    <name type="scientific">Pseudomonas savastanoi pv. phaseolicola (strain 1448A / Race 6)</name>
    <name type="common">Pseudomonas syringae pv. phaseolicola (strain 1448A / Race 6)</name>
    <dbReference type="NCBI Taxonomy" id="264730"/>
    <lineage>
        <taxon>Bacteria</taxon>
        <taxon>Pseudomonadati</taxon>
        <taxon>Pseudomonadota</taxon>
        <taxon>Gammaproteobacteria</taxon>
        <taxon>Pseudomonadales</taxon>
        <taxon>Pseudomonadaceae</taxon>
        <taxon>Pseudomonas</taxon>
    </lineage>
</organism>